<gene>
    <name evidence="1" type="primary">rpsZ</name>
    <name evidence="1" type="synonym">rpsN</name>
    <name type="ordered locus">LMHCC_2915</name>
</gene>
<comment type="function">
    <text evidence="1">Binds 16S rRNA, required for the assembly of 30S particles and may also be responsible for determining the conformation of the 16S rRNA at the A site.</text>
</comment>
<comment type="cofactor">
    <cofactor evidence="1">
        <name>Zn(2+)</name>
        <dbReference type="ChEBI" id="CHEBI:29105"/>
    </cofactor>
    <text evidence="1">Binds 1 zinc ion per subunit.</text>
</comment>
<comment type="subunit">
    <text evidence="1">Part of the 30S ribosomal subunit. Contacts proteins S3 and S10.</text>
</comment>
<comment type="similarity">
    <text evidence="1">Belongs to the universal ribosomal protein uS14 family. Zinc-binding uS14 subfamily.</text>
</comment>
<evidence type="ECO:0000255" key="1">
    <source>
        <dbReference type="HAMAP-Rule" id="MF_01364"/>
    </source>
</evidence>
<evidence type="ECO:0000305" key="2"/>
<accession>B8DB21</accession>
<reference key="1">
    <citation type="journal article" date="2011" name="J. Bacteriol.">
        <title>Genome sequence of lineage III Listeria monocytogenes strain HCC23.</title>
        <authorList>
            <person name="Steele C.L."/>
            <person name="Donaldson J.R."/>
            <person name="Paul D."/>
            <person name="Banes M.M."/>
            <person name="Arick T."/>
            <person name="Bridges S.M."/>
            <person name="Lawrence M.L."/>
        </authorList>
    </citation>
    <scope>NUCLEOTIDE SEQUENCE [LARGE SCALE GENOMIC DNA]</scope>
    <source>
        <strain>HCC23</strain>
    </source>
</reference>
<sequence>MAKKSMIAKQKRTPKYAVQAYTRCERCGRPHSVIRKFKLCRICFRELAYKGQIPGVKKASW</sequence>
<feature type="chain" id="PRO_1000166772" description="Small ribosomal subunit protein uS14">
    <location>
        <begin position="1"/>
        <end position="61"/>
    </location>
</feature>
<feature type="binding site" evidence="1">
    <location>
        <position position="24"/>
    </location>
    <ligand>
        <name>Zn(2+)</name>
        <dbReference type="ChEBI" id="CHEBI:29105"/>
    </ligand>
</feature>
<feature type="binding site" evidence="1">
    <location>
        <position position="27"/>
    </location>
    <ligand>
        <name>Zn(2+)</name>
        <dbReference type="ChEBI" id="CHEBI:29105"/>
    </ligand>
</feature>
<feature type="binding site" evidence="1">
    <location>
        <position position="40"/>
    </location>
    <ligand>
        <name>Zn(2+)</name>
        <dbReference type="ChEBI" id="CHEBI:29105"/>
    </ligand>
</feature>
<feature type="binding site" evidence="1">
    <location>
        <position position="43"/>
    </location>
    <ligand>
        <name>Zn(2+)</name>
        <dbReference type="ChEBI" id="CHEBI:29105"/>
    </ligand>
</feature>
<proteinExistence type="inferred from homology"/>
<organism>
    <name type="scientific">Listeria monocytogenes serotype 4a (strain HCC23)</name>
    <dbReference type="NCBI Taxonomy" id="552536"/>
    <lineage>
        <taxon>Bacteria</taxon>
        <taxon>Bacillati</taxon>
        <taxon>Bacillota</taxon>
        <taxon>Bacilli</taxon>
        <taxon>Bacillales</taxon>
        <taxon>Listeriaceae</taxon>
        <taxon>Listeria</taxon>
    </lineage>
</organism>
<keyword id="KW-0479">Metal-binding</keyword>
<keyword id="KW-0687">Ribonucleoprotein</keyword>
<keyword id="KW-0689">Ribosomal protein</keyword>
<keyword id="KW-0694">RNA-binding</keyword>
<keyword id="KW-0699">rRNA-binding</keyword>
<keyword id="KW-0862">Zinc</keyword>
<name>RS14Z_LISMH</name>
<dbReference type="EMBL" id="CP001175">
    <property type="protein sequence ID" value="ACK41246.1"/>
    <property type="molecule type" value="Genomic_DNA"/>
</dbReference>
<dbReference type="RefSeq" id="WP_003723684.1">
    <property type="nucleotide sequence ID" value="NC_011660.1"/>
</dbReference>
<dbReference type="SMR" id="B8DB21"/>
<dbReference type="KEGG" id="lmh:LMHCC_2915"/>
<dbReference type="HOGENOM" id="CLU_139869_3_0_9"/>
<dbReference type="GO" id="GO:0015935">
    <property type="term" value="C:small ribosomal subunit"/>
    <property type="evidence" value="ECO:0007669"/>
    <property type="project" value="TreeGrafter"/>
</dbReference>
<dbReference type="GO" id="GO:0019843">
    <property type="term" value="F:rRNA binding"/>
    <property type="evidence" value="ECO:0007669"/>
    <property type="project" value="UniProtKB-UniRule"/>
</dbReference>
<dbReference type="GO" id="GO:0003735">
    <property type="term" value="F:structural constituent of ribosome"/>
    <property type="evidence" value="ECO:0007669"/>
    <property type="project" value="InterPro"/>
</dbReference>
<dbReference type="GO" id="GO:0008270">
    <property type="term" value="F:zinc ion binding"/>
    <property type="evidence" value="ECO:0007669"/>
    <property type="project" value="UniProtKB-UniRule"/>
</dbReference>
<dbReference type="GO" id="GO:0006412">
    <property type="term" value="P:translation"/>
    <property type="evidence" value="ECO:0007669"/>
    <property type="project" value="UniProtKB-UniRule"/>
</dbReference>
<dbReference type="FunFam" id="4.10.830.10:FF:000001">
    <property type="entry name" value="30S ribosomal protein S14 type Z"/>
    <property type="match status" value="1"/>
</dbReference>
<dbReference type="Gene3D" id="4.10.830.10">
    <property type="entry name" value="30s Ribosomal Protein S14, Chain N"/>
    <property type="match status" value="1"/>
</dbReference>
<dbReference type="HAMAP" id="MF_01364_B">
    <property type="entry name" value="Ribosomal_uS14_2_B"/>
    <property type="match status" value="1"/>
</dbReference>
<dbReference type="InterPro" id="IPR001209">
    <property type="entry name" value="Ribosomal_uS14"/>
</dbReference>
<dbReference type="InterPro" id="IPR023053">
    <property type="entry name" value="Ribosomal_uS14_bact"/>
</dbReference>
<dbReference type="InterPro" id="IPR018271">
    <property type="entry name" value="Ribosomal_uS14_CS"/>
</dbReference>
<dbReference type="InterPro" id="IPR043140">
    <property type="entry name" value="Ribosomal_uS14_sf"/>
</dbReference>
<dbReference type="NCBIfam" id="NF005974">
    <property type="entry name" value="PRK08061.1"/>
    <property type="match status" value="1"/>
</dbReference>
<dbReference type="PANTHER" id="PTHR19836">
    <property type="entry name" value="30S RIBOSOMAL PROTEIN S14"/>
    <property type="match status" value="1"/>
</dbReference>
<dbReference type="PANTHER" id="PTHR19836:SF26">
    <property type="entry name" value="SMALL RIBOSOMAL SUBUNIT PROTEIN US14B"/>
    <property type="match status" value="1"/>
</dbReference>
<dbReference type="Pfam" id="PF00253">
    <property type="entry name" value="Ribosomal_S14"/>
    <property type="match status" value="1"/>
</dbReference>
<dbReference type="SUPFAM" id="SSF57716">
    <property type="entry name" value="Glucocorticoid receptor-like (DNA-binding domain)"/>
    <property type="match status" value="1"/>
</dbReference>
<dbReference type="PROSITE" id="PS00527">
    <property type="entry name" value="RIBOSOMAL_S14"/>
    <property type="match status" value="1"/>
</dbReference>
<protein>
    <recommendedName>
        <fullName evidence="1">Small ribosomal subunit protein uS14</fullName>
    </recommendedName>
    <alternativeName>
        <fullName evidence="2">30S ribosomal protein S14 type Z</fullName>
    </alternativeName>
</protein>